<accession>Q84L08</accession>
<organism>
    <name type="scientific">Arabidopsis thaliana</name>
    <name type="common">Mouse-ear cress</name>
    <dbReference type="NCBI Taxonomy" id="3702"/>
    <lineage>
        <taxon>Eukaryota</taxon>
        <taxon>Viridiplantae</taxon>
        <taxon>Streptophyta</taxon>
        <taxon>Embryophyta</taxon>
        <taxon>Tracheophyta</taxon>
        <taxon>Spermatophyta</taxon>
        <taxon>Magnoliopsida</taxon>
        <taxon>eudicotyledons</taxon>
        <taxon>Gunneridae</taxon>
        <taxon>Pentapetalae</taxon>
        <taxon>rosids</taxon>
        <taxon>malvids</taxon>
        <taxon>Brassicales</taxon>
        <taxon>Brassicaceae</taxon>
        <taxon>Camelineae</taxon>
        <taxon>Arabidopsis</taxon>
    </lineage>
</organism>
<feature type="chain" id="PRO_0000406123" description="GDP-fucose transporter 1">
    <location>
        <begin position="1"/>
        <end position="341"/>
    </location>
</feature>
<feature type="transmembrane region" description="Helical" evidence="1">
    <location>
        <begin position="17"/>
        <end position="37"/>
    </location>
</feature>
<feature type="transmembrane region" description="Helical" evidence="1">
    <location>
        <begin position="41"/>
        <end position="61"/>
    </location>
</feature>
<feature type="transmembrane region" description="Helical" evidence="1">
    <location>
        <begin position="71"/>
        <end position="91"/>
    </location>
</feature>
<feature type="transmembrane region" description="Helical" evidence="1">
    <location>
        <begin position="103"/>
        <end position="123"/>
    </location>
</feature>
<feature type="transmembrane region" description="Helical" evidence="1">
    <location>
        <begin position="132"/>
        <end position="152"/>
    </location>
</feature>
<feature type="transmembrane region" description="Helical" evidence="1">
    <location>
        <begin position="156"/>
        <end position="176"/>
    </location>
</feature>
<feature type="transmembrane region" description="Helical" evidence="1">
    <location>
        <begin position="187"/>
        <end position="207"/>
    </location>
</feature>
<feature type="transmembrane region" description="Helical" evidence="1">
    <location>
        <begin position="231"/>
        <end position="251"/>
    </location>
</feature>
<feature type="transmembrane region" description="Helical" evidence="1">
    <location>
        <begin position="260"/>
        <end position="280"/>
    </location>
</feature>
<feature type="transmembrane region" description="Helical" evidence="1">
    <location>
        <begin position="283"/>
        <end position="303"/>
    </location>
</feature>
<feature type="region of interest" description="Disordered" evidence="2">
    <location>
        <begin position="316"/>
        <end position="341"/>
    </location>
</feature>
<keyword id="KW-0050">Antiport</keyword>
<keyword id="KW-0333">Golgi apparatus</keyword>
<keyword id="KW-0472">Membrane</keyword>
<keyword id="KW-1185">Reference proteome</keyword>
<keyword id="KW-0762">Sugar transport</keyword>
<keyword id="KW-0812">Transmembrane</keyword>
<keyword id="KW-1133">Transmembrane helix</keyword>
<keyword id="KW-0813">Transport</keyword>
<reference key="1">
    <citation type="journal article" date="2004" name="Mol. Genet. Genomics">
        <title>Arabidopsis thaliana expresses multiple Golgi-localised nucleotide-sugar transporters related to GONST1.</title>
        <authorList>
            <person name="Handford M.G."/>
            <person name="Sicilia F."/>
            <person name="Brandizzi F."/>
            <person name="Chung J.H."/>
            <person name="Dupree P."/>
        </authorList>
    </citation>
    <scope>NUCLEOTIDE SEQUENCE [MRNA]</scope>
    <scope>FUNCTION</scope>
    <scope>SUBCELLULAR LOCATION</scope>
    <scope>TISSUE SPECIFICITY</scope>
    <source>
        <strain>cv. Columbia</strain>
    </source>
</reference>
<reference key="2">
    <citation type="journal article" date="2000" name="Nature">
        <title>Sequence and analysis of chromosome 5 of the plant Arabidopsis thaliana.</title>
        <authorList>
            <person name="Tabata S."/>
            <person name="Kaneko T."/>
            <person name="Nakamura Y."/>
            <person name="Kotani H."/>
            <person name="Kato T."/>
            <person name="Asamizu E."/>
            <person name="Miyajima N."/>
            <person name="Sasamoto S."/>
            <person name="Kimura T."/>
            <person name="Hosouchi T."/>
            <person name="Kawashima K."/>
            <person name="Kohara M."/>
            <person name="Matsumoto M."/>
            <person name="Matsuno A."/>
            <person name="Muraki A."/>
            <person name="Nakayama S."/>
            <person name="Nakazaki N."/>
            <person name="Naruo K."/>
            <person name="Okumura S."/>
            <person name="Shinpo S."/>
            <person name="Takeuchi C."/>
            <person name="Wada T."/>
            <person name="Watanabe A."/>
            <person name="Yamada M."/>
            <person name="Yasuda M."/>
            <person name="Sato S."/>
            <person name="de la Bastide M."/>
            <person name="Huang E."/>
            <person name="Spiegel L."/>
            <person name="Gnoj L."/>
            <person name="O'Shaughnessy A."/>
            <person name="Preston R."/>
            <person name="Habermann K."/>
            <person name="Murray J."/>
            <person name="Johnson D."/>
            <person name="Rohlfing T."/>
            <person name="Nelson J."/>
            <person name="Stoneking T."/>
            <person name="Pepin K."/>
            <person name="Spieth J."/>
            <person name="Sekhon M."/>
            <person name="Armstrong J."/>
            <person name="Becker M."/>
            <person name="Belter E."/>
            <person name="Cordum H."/>
            <person name="Cordes M."/>
            <person name="Courtney L."/>
            <person name="Courtney W."/>
            <person name="Dante M."/>
            <person name="Du H."/>
            <person name="Edwards J."/>
            <person name="Fryman J."/>
            <person name="Haakensen B."/>
            <person name="Lamar E."/>
            <person name="Latreille P."/>
            <person name="Leonard S."/>
            <person name="Meyer R."/>
            <person name="Mulvaney E."/>
            <person name="Ozersky P."/>
            <person name="Riley A."/>
            <person name="Strowmatt C."/>
            <person name="Wagner-McPherson C."/>
            <person name="Wollam A."/>
            <person name="Yoakum M."/>
            <person name="Bell M."/>
            <person name="Dedhia N."/>
            <person name="Parnell L."/>
            <person name="Shah R."/>
            <person name="Rodriguez M."/>
            <person name="Hoon See L."/>
            <person name="Vil D."/>
            <person name="Baker J."/>
            <person name="Kirchoff K."/>
            <person name="Toth K."/>
            <person name="King L."/>
            <person name="Bahret A."/>
            <person name="Miller B."/>
            <person name="Marra M.A."/>
            <person name="Martienssen R."/>
            <person name="McCombie W.R."/>
            <person name="Wilson R.K."/>
            <person name="Murphy G."/>
            <person name="Bancroft I."/>
            <person name="Volckaert G."/>
            <person name="Wambutt R."/>
            <person name="Duesterhoeft A."/>
            <person name="Stiekema W."/>
            <person name="Pohl T."/>
            <person name="Entian K.-D."/>
            <person name="Terryn N."/>
            <person name="Hartley N."/>
            <person name="Bent E."/>
            <person name="Johnson S."/>
            <person name="Langham S.-A."/>
            <person name="McCullagh B."/>
            <person name="Robben J."/>
            <person name="Grymonprez B."/>
            <person name="Zimmermann W."/>
            <person name="Ramsperger U."/>
            <person name="Wedler H."/>
            <person name="Balke K."/>
            <person name="Wedler E."/>
            <person name="Peters S."/>
            <person name="van Staveren M."/>
            <person name="Dirkse W."/>
            <person name="Mooijman P."/>
            <person name="Klein Lankhorst R."/>
            <person name="Weitzenegger T."/>
            <person name="Bothe G."/>
            <person name="Rose M."/>
            <person name="Hauf J."/>
            <person name="Berneiser S."/>
            <person name="Hempel S."/>
            <person name="Feldpausch M."/>
            <person name="Lamberth S."/>
            <person name="Villarroel R."/>
            <person name="Gielen J."/>
            <person name="Ardiles W."/>
            <person name="Bents O."/>
            <person name="Lemcke K."/>
            <person name="Kolesov G."/>
            <person name="Mayer K.F.X."/>
            <person name="Rudd S."/>
            <person name="Schoof H."/>
            <person name="Schueller C."/>
            <person name="Zaccaria P."/>
            <person name="Mewes H.-W."/>
            <person name="Bevan M."/>
            <person name="Fransz P.F."/>
        </authorList>
    </citation>
    <scope>NUCLEOTIDE SEQUENCE [LARGE SCALE GENOMIC DNA]</scope>
    <source>
        <strain>cv. Columbia</strain>
    </source>
</reference>
<reference key="3">
    <citation type="journal article" date="2017" name="Plant J.">
        <title>Araport11: a complete reannotation of the Arabidopsis thaliana reference genome.</title>
        <authorList>
            <person name="Cheng C.Y."/>
            <person name="Krishnakumar V."/>
            <person name="Chan A.P."/>
            <person name="Thibaud-Nissen F."/>
            <person name="Schobel S."/>
            <person name="Town C.D."/>
        </authorList>
    </citation>
    <scope>GENOME REANNOTATION</scope>
    <source>
        <strain>cv. Columbia</strain>
    </source>
</reference>
<reference key="4">
    <citation type="submission" date="2006-03" db="EMBL/GenBank/DDBJ databases">
        <title>Arabidopsis ORF clones.</title>
        <authorList>
            <person name="Shinn P."/>
            <person name="Chen H."/>
            <person name="Kim C.J."/>
            <person name="Ecker J.R."/>
        </authorList>
    </citation>
    <scope>NUCLEOTIDE SEQUENCE [LARGE SCALE MRNA]</scope>
    <source>
        <strain>cv. Columbia</strain>
    </source>
</reference>
<reference key="5">
    <citation type="journal article" date="2014" name="Proc. Natl. Acad. Sci. U.S.A.">
        <title>The Golgi localized bifunctional UDP-rhamnose/UDP-galactose transporter family of Arabidopsis.</title>
        <authorList>
            <person name="Rautengarten C."/>
            <person name="Ebert B."/>
            <person name="Moreno I."/>
            <person name="Temple H."/>
            <person name="Herter T."/>
            <person name="Link B."/>
            <person name="Donas-Cofre D."/>
            <person name="Moreno A."/>
            <person name="Saez-Aguayo S."/>
            <person name="Blanco F."/>
            <person name="Mortimer J.C."/>
            <person name="Schultink A."/>
            <person name="Reiter W.D."/>
            <person name="Dupree P."/>
            <person name="Pauly M."/>
            <person name="Heazlewood J.L."/>
            <person name="Scheller H.V."/>
            <person name="Orellana A."/>
        </authorList>
    </citation>
    <scope>GENE FAMILY</scope>
</reference>
<reference key="6">
    <citation type="journal article" date="2016" name="Nat. Commun.">
        <title>The Arabidopsis Golgi-localized GDP-L-fucose transporter is required for plant development.</title>
        <authorList>
            <person name="Rautengarten C."/>
            <person name="Ebert B."/>
            <person name="Liu L."/>
            <person name="Stonebloom S."/>
            <person name="Smith-Moritz A.M."/>
            <person name="Pauly M."/>
            <person name="Orellana A."/>
            <person name="Scheller H.V."/>
            <person name="Heazlewood J.L."/>
        </authorList>
    </citation>
    <scope>FUNCTION</scope>
    <scope>TISSUE SPECIFICITY</scope>
    <scope>SUBCELLULAR LOCATION</scope>
    <scope>BIOPHYSICOCHEMICAL PROPERTIES</scope>
</reference>
<proteinExistence type="evidence at protein level"/>
<dbReference type="EMBL" id="AJ551327">
    <property type="protein sequence ID" value="CAD83088.1"/>
    <property type="molecule type" value="mRNA"/>
</dbReference>
<dbReference type="EMBL" id="AF296836">
    <property type="status" value="NOT_ANNOTATED_CDS"/>
    <property type="molecule type" value="Genomic_DNA"/>
</dbReference>
<dbReference type="EMBL" id="CP002688">
    <property type="protein sequence ID" value="AED92776.1"/>
    <property type="molecule type" value="Genomic_DNA"/>
</dbReference>
<dbReference type="EMBL" id="BT024734">
    <property type="protein sequence ID" value="ABD59072.1"/>
    <property type="molecule type" value="mRNA"/>
</dbReference>
<dbReference type="RefSeq" id="NP_197498.1">
    <property type="nucleotide sequence ID" value="NM_122005.4"/>
</dbReference>
<dbReference type="SMR" id="Q84L08"/>
<dbReference type="FunCoup" id="Q84L08">
    <property type="interactions" value="337"/>
</dbReference>
<dbReference type="STRING" id="3702.Q84L08"/>
<dbReference type="iPTMnet" id="Q84L08"/>
<dbReference type="PaxDb" id="3702-AT5G19980.1"/>
<dbReference type="ProteomicsDB" id="221830"/>
<dbReference type="EnsemblPlants" id="AT5G19980.1">
    <property type="protein sequence ID" value="AT5G19980.1"/>
    <property type="gene ID" value="AT5G19980"/>
</dbReference>
<dbReference type="GeneID" id="832120"/>
<dbReference type="Gramene" id="AT5G19980.1">
    <property type="protein sequence ID" value="AT5G19980.1"/>
    <property type="gene ID" value="AT5G19980"/>
</dbReference>
<dbReference type="KEGG" id="ath:AT5G19980"/>
<dbReference type="Araport" id="AT5G19980"/>
<dbReference type="TAIR" id="AT5G19980">
    <property type="gene designation" value="GONST4"/>
</dbReference>
<dbReference type="eggNOG" id="KOG1444">
    <property type="taxonomic scope" value="Eukaryota"/>
</dbReference>
<dbReference type="HOGENOM" id="CLU_045047_1_0_1"/>
<dbReference type="InParanoid" id="Q84L08"/>
<dbReference type="OMA" id="FAITWFN"/>
<dbReference type="OrthoDB" id="417037at2759"/>
<dbReference type="PhylomeDB" id="Q84L08"/>
<dbReference type="PRO" id="PR:Q84L08"/>
<dbReference type="Proteomes" id="UP000006548">
    <property type="component" value="Chromosome 5"/>
</dbReference>
<dbReference type="ExpressionAtlas" id="Q84L08">
    <property type="expression patterns" value="baseline and differential"/>
</dbReference>
<dbReference type="GO" id="GO:0005794">
    <property type="term" value="C:Golgi apparatus"/>
    <property type="evidence" value="ECO:0000314"/>
    <property type="project" value="UniProtKB"/>
</dbReference>
<dbReference type="GO" id="GO:0000139">
    <property type="term" value="C:Golgi membrane"/>
    <property type="evidence" value="ECO:0007669"/>
    <property type="project" value="UniProtKB-SubCell"/>
</dbReference>
<dbReference type="GO" id="GO:0000138">
    <property type="term" value="C:Golgi trans cisterna"/>
    <property type="evidence" value="ECO:0007005"/>
    <property type="project" value="TAIR"/>
</dbReference>
<dbReference type="GO" id="GO:0015297">
    <property type="term" value="F:antiporter activity"/>
    <property type="evidence" value="ECO:0000314"/>
    <property type="project" value="UniProtKB"/>
</dbReference>
<dbReference type="GO" id="GO:0005457">
    <property type="term" value="F:GDP-fucose transmembrane transporter activity"/>
    <property type="evidence" value="ECO:0000314"/>
    <property type="project" value="TAIR"/>
</dbReference>
<dbReference type="GO" id="GO:0015780">
    <property type="term" value="P:nucleotide-sugar transmembrane transport"/>
    <property type="evidence" value="ECO:0000316"/>
    <property type="project" value="TAIR"/>
</dbReference>
<dbReference type="InterPro" id="IPR004853">
    <property type="entry name" value="Sugar_P_trans_dom"/>
</dbReference>
<dbReference type="InterPro" id="IPR050186">
    <property type="entry name" value="TPT_transporter"/>
</dbReference>
<dbReference type="PANTHER" id="PTHR11132">
    <property type="entry name" value="SOLUTE CARRIER FAMILY 35"/>
    <property type="match status" value="1"/>
</dbReference>
<dbReference type="Pfam" id="PF03151">
    <property type="entry name" value="TPT"/>
    <property type="match status" value="1"/>
</dbReference>
<evidence type="ECO:0000255" key="1"/>
<evidence type="ECO:0000256" key="2">
    <source>
        <dbReference type="SAM" id="MobiDB-lite"/>
    </source>
</evidence>
<evidence type="ECO:0000269" key="3">
    <source>
    </source>
</evidence>
<evidence type="ECO:0000269" key="4">
    <source>
    </source>
</evidence>
<evidence type="ECO:0000303" key="5">
    <source>
    </source>
</evidence>
<evidence type="ECO:0000303" key="6">
    <source>
    </source>
</evidence>
<evidence type="ECO:0000305" key="7"/>
<evidence type="ECO:0000312" key="8">
    <source>
        <dbReference type="Araport" id="AT5G19980"/>
    </source>
</evidence>
<evidence type="ECO:0000312" key="9">
    <source>
        <dbReference type="EMBL" id="AF296836"/>
    </source>
</evidence>
<evidence type="ECO:0000312" key="10">
    <source>
        <dbReference type="EMBL" id="CAD83088.1"/>
    </source>
</evidence>
<sequence length="341" mass="37386">MSSSRFDSNKQLTTSSLVIGYALCSSLLAVINKLAITYFNYPGLLTALQYLTCTVAVYLLGKSGLINHDPFTWDTAKKFLPAAIVFYLAIFTNTNLLRHANVDTFIVFRSLTPLLVAIADTVFRSQPLPSRLTFLSLVVILAGAVGYVATDSSFTLTAYSWALAYLVTITTEMVYIKHMVSNIKLNIWGLVLYNNLLSLMIAPVFWFLTGEFTEVFAALSENRGNLFEPYAFSSVAASCVFGFLISYFGFAARNAISATAFTVTGVVNKFLTVVINVLIWDKHATPVGLVCLLFTICGGVGYQQSVKLDKPIEKVSEKDSEKGEEDEELTQLVPGKLASVV</sequence>
<protein>
    <recommendedName>
        <fullName evidence="6">GDP-fucose transporter 1</fullName>
    </recommendedName>
    <alternativeName>
        <fullName evidence="5">GDP-mannose transporter GONST4</fullName>
    </alternativeName>
    <alternativeName>
        <fullName evidence="5">Protein GOLGI NUCLEOTIDE SUGAR TRANSPORTER 4</fullName>
    </alternativeName>
</protein>
<name>GFT1_ARATH</name>
<gene>
    <name evidence="6" type="primary">GFT1</name>
    <name evidence="10" type="synonym">GONST4</name>
    <name evidence="8" type="ordered locus">At5g19980</name>
    <name evidence="9" type="ORF">F28I16.130</name>
</gene>
<comment type="function">
    <text evidence="3 4">Acts as the major nucleotide-sugar transporter for the import of GDP-Fucose into the Golgi lumen. Transports GDP-Fucose in a strict counter-exchange mode. Is required for proper plant growth and development (PubMed:27381418). Also acts as a GDP-mannose transporter that may be involved in the import of GDP-mannose from the cytoplasm into the Golgi lumen (PubMed:15480787).</text>
</comment>
<comment type="biophysicochemical properties">
    <kinetics>
        <KM evidence="4">7 uM for UDP-Fucose</KM>
        <Vmax evidence="4">54.0 nmol/sec/mg enzyme toward UDP-Fucose</Vmax>
    </kinetics>
</comment>
<comment type="subcellular location">
    <subcellularLocation>
        <location evidence="3 4">Golgi apparatus membrane</location>
        <topology evidence="3">Multi-pass membrane protein</topology>
    </subcellularLocation>
</comment>
<comment type="tissue specificity">
    <text evidence="3 4">Ubiquitous.</text>
</comment>
<comment type="miscellaneous">
    <text evidence="4">RNAi plants display dwarfed phenotype with severe developmental growth defects. Cell wall composition of the RNAi plants shows a considerable reduction of the fucose content. GFT1 down-regulation also has an impact on the levels of protein fucosylation.</text>
</comment>
<comment type="similarity">
    <text evidence="7">Belongs to the nucleotide-sugar transporter family. GDP-Mannose:GMP antiporter (GMA) (TC 2.A.7.13) subfamily.</text>
</comment>